<reference key="1">
    <citation type="journal article" date="2007" name="Proc. Natl. Acad. Sci. U.S.A.">
        <title>The genome of Syntrophus aciditrophicus: life at the thermodynamic limit of microbial growth.</title>
        <authorList>
            <person name="McInerney M.J."/>
            <person name="Rohlin L."/>
            <person name="Mouttaki H."/>
            <person name="Kim U."/>
            <person name="Krupp R.S."/>
            <person name="Rios-Hernandez L."/>
            <person name="Sieber J."/>
            <person name="Struchtemeyer C.G."/>
            <person name="Bhattacharyya A."/>
            <person name="Campbell J.W."/>
            <person name="Gunsalus R.P."/>
        </authorList>
    </citation>
    <scope>NUCLEOTIDE SEQUENCE [LARGE SCALE GENOMIC DNA]</scope>
    <source>
        <strain>SB</strain>
    </source>
</reference>
<dbReference type="EMBL" id="CP000252">
    <property type="protein sequence ID" value="ABC76618.1"/>
    <property type="molecule type" value="Genomic_DNA"/>
</dbReference>
<dbReference type="RefSeq" id="WP_011416652.1">
    <property type="nucleotide sequence ID" value="NC_007759.1"/>
</dbReference>
<dbReference type="SMR" id="Q2LRB1"/>
<dbReference type="FunCoup" id="Q2LRB1">
    <property type="interactions" value="455"/>
</dbReference>
<dbReference type="STRING" id="56780.SYN_02974"/>
<dbReference type="KEGG" id="sat:SYN_02974"/>
<dbReference type="eggNOG" id="COG0217">
    <property type="taxonomic scope" value="Bacteria"/>
</dbReference>
<dbReference type="HOGENOM" id="CLU_062974_2_2_7"/>
<dbReference type="InParanoid" id="Q2LRB1"/>
<dbReference type="OrthoDB" id="9781053at2"/>
<dbReference type="Proteomes" id="UP000001933">
    <property type="component" value="Chromosome"/>
</dbReference>
<dbReference type="GO" id="GO:0005829">
    <property type="term" value="C:cytosol"/>
    <property type="evidence" value="ECO:0007669"/>
    <property type="project" value="TreeGrafter"/>
</dbReference>
<dbReference type="GO" id="GO:0003677">
    <property type="term" value="F:DNA binding"/>
    <property type="evidence" value="ECO:0007669"/>
    <property type="project" value="UniProtKB-UniRule"/>
</dbReference>
<dbReference type="GO" id="GO:0006355">
    <property type="term" value="P:regulation of DNA-templated transcription"/>
    <property type="evidence" value="ECO:0007669"/>
    <property type="project" value="UniProtKB-UniRule"/>
</dbReference>
<dbReference type="FunFam" id="1.10.10.200:FF:000002">
    <property type="entry name" value="Probable transcriptional regulatory protein CLM62_37755"/>
    <property type="match status" value="1"/>
</dbReference>
<dbReference type="FunFam" id="3.30.70.980:FF:000002">
    <property type="entry name" value="Probable transcriptional regulatory protein YebC"/>
    <property type="match status" value="1"/>
</dbReference>
<dbReference type="Gene3D" id="1.10.10.200">
    <property type="match status" value="1"/>
</dbReference>
<dbReference type="Gene3D" id="3.30.70.980">
    <property type="match status" value="2"/>
</dbReference>
<dbReference type="HAMAP" id="MF_00693">
    <property type="entry name" value="Transcrip_reg_TACO1"/>
    <property type="match status" value="1"/>
</dbReference>
<dbReference type="InterPro" id="IPR017856">
    <property type="entry name" value="Integrase-like_N"/>
</dbReference>
<dbReference type="InterPro" id="IPR048300">
    <property type="entry name" value="TACO1_YebC-like_2nd/3rd_dom"/>
</dbReference>
<dbReference type="InterPro" id="IPR049083">
    <property type="entry name" value="TACO1_YebC_N"/>
</dbReference>
<dbReference type="InterPro" id="IPR002876">
    <property type="entry name" value="Transcrip_reg_TACO1-like"/>
</dbReference>
<dbReference type="InterPro" id="IPR026564">
    <property type="entry name" value="Transcrip_reg_TACO1-like_dom3"/>
</dbReference>
<dbReference type="InterPro" id="IPR029072">
    <property type="entry name" value="YebC-like"/>
</dbReference>
<dbReference type="NCBIfam" id="NF001030">
    <property type="entry name" value="PRK00110.1"/>
    <property type="match status" value="1"/>
</dbReference>
<dbReference type="NCBIfam" id="NF009044">
    <property type="entry name" value="PRK12378.1"/>
    <property type="match status" value="1"/>
</dbReference>
<dbReference type="NCBIfam" id="TIGR01033">
    <property type="entry name" value="YebC/PmpR family DNA-binding transcriptional regulator"/>
    <property type="match status" value="1"/>
</dbReference>
<dbReference type="PANTHER" id="PTHR12532:SF6">
    <property type="entry name" value="TRANSCRIPTIONAL REGULATORY PROTEIN YEBC-RELATED"/>
    <property type="match status" value="1"/>
</dbReference>
<dbReference type="PANTHER" id="PTHR12532">
    <property type="entry name" value="TRANSLATIONAL ACTIVATOR OF CYTOCHROME C OXIDASE 1"/>
    <property type="match status" value="1"/>
</dbReference>
<dbReference type="Pfam" id="PF20772">
    <property type="entry name" value="TACO1_YebC_N"/>
    <property type="match status" value="1"/>
</dbReference>
<dbReference type="Pfam" id="PF01709">
    <property type="entry name" value="Transcrip_reg"/>
    <property type="match status" value="1"/>
</dbReference>
<dbReference type="SUPFAM" id="SSF75625">
    <property type="entry name" value="YebC-like"/>
    <property type="match status" value="1"/>
</dbReference>
<protein>
    <recommendedName>
        <fullName evidence="1">Probable transcriptional regulatory protein SYNAS_07390</fullName>
    </recommendedName>
</protein>
<name>Y739_SYNAS</name>
<proteinExistence type="inferred from homology"/>
<keyword id="KW-0963">Cytoplasm</keyword>
<keyword id="KW-0238">DNA-binding</keyword>
<keyword id="KW-1185">Reference proteome</keyword>
<keyword id="KW-0804">Transcription</keyword>
<keyword id="KW-0805">Transcription regulation</keyword>
<gene>
    <name type="ordered locus">SYNAS_07390</name>
    <name type="ORF">SYN_02974</name>
</gene>
<accession>Q2LRB1</accession>
<feature type="chain" id="PRO_0000257152" description="Probable transcriptional regulatory protein SYNAS_07390">
    <location>
        <begin position="1"/>
        <end position="250"/>
    </location>
</feature>
<evidence type="ECO:0000255" key="1">
    <source>
        <dbReference type="HAMAP-Rule" id="MF_00693"/>
    </source>
</evidence>
<comment type="subcellular location">
    <subcellularLocation>
        <location evidence="1">Cytoplasm</location>
    </subcellularLocation>
</comment>
<comment type="similarity">
    <text evidence="1">Belongs to the TACO1 family.</text>
</comment>
<sequence length="250" mass="27688">MSGHSKWSTIKRKKGAIDSKRGKIFTKIIKEITLAARLGGGDTEGNSRLRQAILAAKNENMPRDNIDRAIKKGTGEIGGGESYEEVTYEGYGPGGVAVLVEVMTDNKNRTVAEIRHIFSKHGGNLGGNGCVSWLFEKKGSIVFDRDLIDEDALMELALEAGAEDIREEESQMDVITDPSMFDKVRDVLEGKGMKYVQASIEMVPQNTIRLDEGKAEQMLKMIEKLEDNDDVQNVYANFDIPDEIMEKLSA</sequence>
<organism>
    <name type="scientific">Syntrophus aciditrophicus (strain SB)</name>
    <dbReference type="NCBI Taxonomy" id="56780"/>
    <lineage>
        <taxon>Bacteria</taxon>
        <taxon>Pseudomonadati</taxon>
        <taxon>Thermodesulfobacteriota</taxon>
        <taxon>Syntrophia</taxon>
        <taxon>Syntrophales</taxon>
        <taxon>Syntrophaceae</taxon>
        <taxon>Syntrophus</taxon>
    </lineage>
</organism>